<reference key="1">
    <citation type="journal article" date="2011" name="J. Bacteriol.">
        <title>Comparative genomics of 28 Salmonella enterica isolates: evidence for CRISPR-mediated adaptive sublineage evolution.</title>
        <authorList>
            <person name="Fricke W.F."/>
            <person name="Mammel M.K."/>
            <person name="McDermott P.F."/>
            <person name="Tartera C."/>
            <person name="White D.G."/>
            <person name="Leclerc J.E."/>
            <person name="Ravel J."/>
            <person name="Cebula T.A."/>
        </authorList>
    </citation>
    <scope>NUCLEOTIDE SEQUENCE [LARGE SCALE GENOMIC DNA]</scope>
    <source>
        <strain>CVM19633</strain>
    </source>
</reference>
<gene>
    <name evidence="1" type="primary">hutG</name>
    <name type="ordered locus">SeSA_A0938</name>
</gene>
<proteinExistence type="inferred from homology"/>
<sequence length="313" mass="34445">MTQWYPASPALWQGRDDSIEAPDARRLFQTVTRSETFSPENWQQKIALMGFACDEGVKRNAGRPGAAGAPDALRKALANMASHQGHERLVDLGNWVAPTPDLEGAQQALRDAVSRCLRAGMRTLVLGGGHETAFGHGAGVLDVFAQESVGIINLDAHLDLRQTDRATSGTPFRQLAQLCDAQSRAFHYACFGVSRAANTQALWRETQWRNVTVVEDLDCHDALAQMTQFIDKVDKIYLTIDLDVLPVWEMPAVSAPAALGVPLIQVLRLIEPVCRSGKLQAADLVEFNPRFDEDGAAARVAARLGWQIAHWWR</sequence>
<accession>B4TQT3</accession>
<name>HUTG_SALSV</name>
<feature type="chain" id="PRO_1000133012" description="Formimidoylglutamase">
    <location>
        <begin position="1"/>
        <end position="313"/>
    </location>
</feature>
<feature type="binding site" evidence="1">
    <location>
        <position position="130"/>
    </location>
    <ligand>
        <name>Mn(2+)</name>
        <dbReference type="ChEBI" id="CHEBI:29035"/>
        <label>1</label>
    </ligand>
</feature>
<feature type="binding site" evidence="1">
    <location>
        <position position="155"/>
    </location>
    <ligand>
        <name>Mn(2+)</name>
        <dbReference type="ChEBI" id="CHEBI:29035"/>
        <label>1</label>
    </ligand>
</feature>
<feature type="binding site" evidence="1">
    <location>
        <position position="155"/>
    </location>
    <ligand>
        <name>Mn(2+)</name>
        <dbReference type="ChEBI" id="CHEBI:29035"/>
        <label>2</label>
    </ligand>
</feature>
<feature type="binding site" evidence="1">
    <location>
        <position position="157"/>
    </location>
    <ligand>
        <name>Mn(2+)</name>
        <dbReference type="ChEBI" id="CHEBI:29035"/>
        <label>2</label>
    </ligand>
</feature>
<feature type="binding site" evidence="1">
    <location>
        <position position="159"/>
    </location>
    <ligand>
        <name>Mn(2+)</name>
        <dbReference type="ChEBI" id="CHEBI:29035"/>
        <label>1</label>
    </ligand>
</feature>
<feature type="binding site" evidence="1">
    <location>
        <position position="241"/>
    </location>
    <ligand>
        <name>Mn(2+)</name>
        <dbReference type="ChEBI" id="CHEBI:29035"/>
        <label>1</label>
    </ligand>
</feature>
<feature type="binding site" evidence="1">
    <location>
        <position position="241"/>
    </location>
    <ligand>
        <name>Mn(2+)</name>
        <dbReference type="ChEBI" id="CHEBI:29035"/>
        <label>2</label>
    </ligand>
</feature>
<feature type="binding site" evidence="1">
    <location>
        <position position="243"/>
    </location>
    <ligand>
        <name>Mn(2+)</name>
        <dbReference type="ChEBI" id="CHEBI:29035"/>
        <label>2</label>
    </ligand>
</feature>
<keyword id="KW-0369">Histidine metabolism</keyword>
<keyword id="KW-0378">Hydrolase</keyword>
<keyword id="KW-0464">Manganese</keyword>
<keyword id="KW-0479">Metal-binding</keyword>
<evidence type="ECO:0000255" key="1">
    <source>
        <dbReference type="HAMAP-Rule" id="MF_00737"/>
    </source>
</evidence>
<comment type="function">
    <text evidence="1">Catalyzes the conversion of N-formimidoyl-L-glutamate to L-glutamate and formamide.</text>
</comment>
<comment type="catalytic activity">
    <reaction evidence="1">
        <text>N-formimidoyl-L-glutamate + H2O = formamide + L-glutamate</text>
        <dbReference type="Rhea" id="RHEA:22492"/>
        <dbReference type="ChEBI" id="CHEBI:15377"/>
        <dbReference type="ChEBI" id="CHEBI:16397"/>
        <dbReference type="ChEBI" id="CHEBI:29985"/>
        <dbReference type="ChEBI" id="CHEBI:58928"/>
        <dbReference type="EC" id="3.5.3.8"/>
    </reaction>
</comment>
<comment type="cofactor">
    <cofactor evidence="1">
        <name>Mn(2+)</name>
        <dbReference type="ChEBI" id="CHEBI:29035"/>
    </cofactor>
    <text evidence="1">Binds 2 manganese ions per subunit.</text>
</comment>
<comment type="pathway">
    <text evidence="1">Amino-acid degradation; L-histidine degradation into L-glutamate; L-glutamate from N-formimidoyl-L-glutamate (hydrolase route): step 1/1.</text>
</comment>
<comment type="similarity">
    <text evidence="1">Belongs to the arginase family.</text>
</comment>
<organism>
    <name type="scientific">Salmonella schwarzengrund (strain CVM19633)</name>
    <dbReference type="NCBI Taxonomy" id="439843"/>
    <lineage>
        <taxon>Bacteria</taxon>
        <taxon>Pseudomonadati</taxon>
        <taxon>Pseudomonadota</taxon>
        <taxon>Gammaproteobacteria</taxon>
        <taxon>Enterobacterales</taxon>
        <taxon>Enterobacteriaceae</taxon>
        <taxon>Salmonella</taxon>
    </lineage>
</organism>
<dbReference type="EC" id="3.5.3.8" evidence="1"/>
<dbReference type="EMBL" id="CP001127">
    <property type="protein sequence ID" value="ACF88937.1"/>
    <property type="molecule type" value="Genomic_DNA"/>
</dbReference>
<dbReference type="RefSeq" id="WP_000195685.1">
    <property type="nucleotide sequence ID" value="NC_011094.1"/>
</dbReference>
<dbReference type="SMR" id="B4TQT3"/>
<dbReference type="KEGG" id="sew:SeSA_A0938"/>
<dbReference type="HOGENOM" id="CLU_039478_2_0_6"/>
<dbReference type="UniPathway" id="UPA00379">
    <property type="reaction ID" value="UER00552"/>
</dbReference>
<dbReference type="Proteomes" id="UP000001865">
    <property type="component" value="Chromosome"/>
</dbReference>
<dbReference type="GO" id="GO:0008783">
    <property type="term" value="F:agmatinase activity"/>
    <property type="evidence" value="ECO:0007669"/>
    <property type="project" value="TreeGrafter"/>
</dbReference>
<dbReference type="GO" id="GO:0050415">
    <property type="term" value="F:formimidoylglutamase activity"/>
    <property type="evidence" value="ECO:0007669"/>
    <property type="project" value="UniProtKB-UniRule"/>
</dbReference>
<dbReference type="GO" id="GO:0030145">
    <property type="term" value="F:manganese ion binding"/>
    <property type="evidence" value="ECO:0007669"/>
    <property type="project" value="UniProtKB-UniRule"/>
</dbReference>
<dbReference type="GO" id="GO:0019556">
    <property type="term" value="P:L-histidine catabolic process to glutamate and formamide"/>
    <property type="evidence" value="ECO:0007669"/>
    <property type="project" value="UniProtKB-UniPathway"/>
</dbReference>
<dbReference type="GO" id="GO:0019557">
    <property type="term" value="P:L-histidine catabolic process to glutamate and formate"/>
    <property type="evidence" value="ECO:0007669"/>
    <property type="project" value="UniProtKB-UniPathway"/>
</dbReference>
<dbReference type="GO" id="GO:0033389">
    <property type="term" value="P:putrescine biosynthetic process from arginine, via agmatine"/>
    <property type="evidence" value="ECO:0007669"/>
    <property type="project" value="TreeGrafter"/>
</dbReference>
<dbReference type="CDD" id="cd09988">
    <property type="entry name" value="Formimidoylglutamase"/>
    <property type="match status" value="1"/>
</dbReference>
<dbReference type="FunFam" id="3.40.800.10:FF:000010">
    <property type="entry name" value="Formimidoylglutamase"/>
    <property type="match status" value="1"/>
</dbReference>
<dbReference type="Gene3D" id="3.40.800.10">
    <property type="entry name" value="Ureohydrolase domain"/>
    <property type="match status" value="1"/>
</dbReference>
<dbReference type="HAMAP" id="MF_00737">
    <property type="entry name" value="Formimidoylglutam"/>
    <property type="match status" value="1"/>
</dbReference>
<dbReference type="InterPro" id="IPR005923">
    <property type="entry name" value="HutG"/>
</dbReference>
<dbReference type="InterPro" id="IPR006035">
    <property type="entry name" value="Ureohydrolase"/>
</dbReference>
<dbReference type="InterPro" id="IPR023696">
    <property type="entry name" value="Ureohydrolase_dom_sf"/>
</dbReference>
<dbReference type="NCBIfam" id="TIGR01227">
    <property type="entry name" value="hutG"/>
    <property type="match status" value="1"/>
</dbReference>
<dbReference type="PANTHER" id="PTHR11358">
    <property type="entry name" value="ARGINASE/AGMATINASE"/>
    <property type="match status" value="1"/>
</dbReference>
<dbReference type="PANTHER" id="PTHR11358:SF35">
    <property type="entry name" value="FORMIMIDOYLGLUTAMASE"/>
    <property type="match status" value="1"/>
</dbReference>
<dbReference type="Pfam" id="PF00491">
    <property type="entry name" value="Arginase"/>
    <property type="match status" value="1"/>
</dbReference>
<dbReference type="PIRSF" id="PIRSF036979">
    <property type="entry name" value="Arginase"/>
    <property type="match status" value="1"/>
</dbReference>
<dbReference type="SUPFAM" id="SSF52768">
    <property type="entry name" value="Arginase/deacetylase"/>
    <property type="match status" value="1"/>
</dbReference>
<dbReference type="PROSITE" id="PS51409">
    <property type="entry name" value="ARGINASE_2"/>
    <property type="match status" value="1"/>
</dbReference>
<protein>
    <recommendedName>
        <fullName evidence="1">Formimidoylglutamase</fullName>
        <ecNumber evidence="1">3.5.3.8</ecNumber>
    </recommendedName>
    <alternativeName>
        <fullName evidence="1">Formiminoglutamase</fullName>
    </alternativeName>
    <alternativeName>
        <fullName evidence="1">Formiminoglutamate hydrolase</fullName>
    </alternativeName>
</protein>